<dbReference type="EC" id="2.7.7.6" evidence="1"/>
<dbReference type="EMBL" id="CP000394">
    <property type="protein sequence ID" value="ABI61476.1"/>
    <property type="molecule type" value="Genomic_DNA"/>
</dbReference>
<dbReference type="RefSeq" id="WP_011631285.1">
    <property type="nucleotide sequence ID" value="NC_008343.2"/>
</dbReference>
<dbReference type="SMR" id="Q0BUM6"/>
<dbReference type="STRING" id="391165.GbCGDNIH1_0578"/>
<dbReference type="GeneID" id="69744831"/>
<dbReference type="KEGG" id="gbe:GbCGDNIH1_0578"/>
<dbReference type="eggNOG" id="COG0202">
    <property type="taxonomic scope" value="Bacteria"/>
</dbReference>
<dbReference type="HOGENOM" id="CLU_053084_0_0_5"/>
<dbReference type="OrthoDB" id="9805706at2"/>
<dbReference type="Proteomes" id="UP000001963">
    <property type="component" value="Chromosome"/>
</dbReference>
<dbReference type="GO" id="GO:0005737">
    <property type="term" value="C:cytoplasm"/>
    <property type="evidence" value="ECO:0007669"/>
    <property type="project" value="UniProtKB-ARBA"/>
</dbReference>
<dbReference type="GO" id="GO:0000428">
    <property type="term" value="C:DNA-directed RNA polymerase complex"/>
    <property type="evidence" value="ECO:0007669"/>
    <property type="project" value="UniProtKB-KW"/>
</dbReference>
<dbReference type="GO" id="GO:0003677">
    <property type="term" value="F:DNA binding"/>
    <property type="evidence" value="ECO:0007669"/>
    <property type="project" value="UniProtKB-UniRule"/>
</dbReference>
<dbReference type="GO" id="GO:0003899">
    <property type="term" value="F:DNA-directed RNA polymerase activity"/>
    <property type="evidence" value="ECO:0007669"/>
    <property type="project" value="UniProtKB-UniRule"/>
</dbReference>
<dbReference type="GO" id="GO:0046983">
    <property type="term" value="F:protein dimerization activity"/>
    <property type="evidence" value="ECO:0007669"/>
    <property type="project" value="InterPro"/>
</dbReference>
<dbReference type="GO" id="GO:0006351">
    <property type="term" value="P:DNA-templated transcription"/>
    <property type="evidence" value="ECO:0007669"/>
    <property type="project" value="UniProtKB-UniRule"/>
</dbReference>
<dbReference type="CDD" id="cd06928">
    <property type="entry name" value="RNAP_alpha_NTD"/>
    <property type="match status" value="1"/>
</dbReference>
<dbReference type="FunFam" id="1.10.150.20:FF:000001">
    <property type="entry name" value="DNA-directed RNA polymerase subunit alpha"/>
    <property type="match status" value="1"/>
</dbReference>
<dbReference type="FunFam" id="2.170.120.12:FF:000001">
    <property type="entry name" value="DNA-directed RNA polymerase subunit alpha"/>
    <property type="match status" value="1"/>
</dbReference>
<dbReference type="Gene3D" id="1.10.150.20">
    <property type="entry name" value="5' to 3' exonuclease, C-terminal subdomain"/>
    <property type="match status" value="1"/>
</dbReference>
<dbReference type="Gene3D" id="2.170.120.12">
    <property type="entry name" value="DNA-directed RNA polymerase, insert domain"/>
    <property type="match status" value="1"/>
</dbReference>
<dbReference type="Gene3D" id="3.30.1360.10">
    <property type="entry name" value="RNA polymerase, RBP11-like subunit"/>
    <property type="match status" value="1"/>
</dbReference>
<dbReference type="HAMAP" id="MF_00059">
    <property type="entry name" value="RNApol_bact_RpoA"/>
    <property type="match status" value="1"/>
</dbReference>
<dbReference type="InterPro" id="IPR011262">
    <property type="entry name" value="DNA-dir_RNA_pol_insert"/>
</dbReference>
<dbReference type="InterPro" id="IPR011263">
    <property type="entry name" value="DNA-dir_RNA_pol_RpoA/D/Rpb3"/>
</dbReference>
<dbReference type="InterPro" id="IPR011773">
    <property type="entry name" value="DNA-dir_RpoA"/>
</dbReference>
<dbReference type="InterPro" id="IPR036603">
    <property type="entry name" value="RBP11-like"/>
</dbReference>
<dbReference type="InterPro" id="IPR011260">
    <property type="entry name" value="RNAP_asu_C"/>
</dbReference>
<dbReference type="InterPro" id="IPR036643">
    <property type="entry name" value="RNApol_insert_sf"/>
</dbReference>
<dbReference type="NCBIfam" id="NF003513">
    <property type="entry name" value="PRK05182.1-2"/>
    <property type="match status" value="1"/>
</dbReference>
<dbReference type="NCBIfam" id="NF003519">
    <property type="entry name" value="PRK05182.2-5"/>
    <property type="match status" value="1"/>
</dbReference>
<dbReference type="NCBIfam" id="TIGR02027">
    <property type="entry name" value="rpoA"/>
    <property type="match status" value="1"/>
</dbReference>
<dbReference type="Pfam" id="PF01000">
    <property type="entry name" value="RNA_pol_A_bac"/>
    <property type="match status" value="1"/>
</dbReference>
<dbReference type="Pfam" id="PF03118">
    <property type="entry name" value="RNA_pol_A_CTD"/>
    <property type="match status" value="1"/>
</dbReference>
<dbReference type="Pfam" id="PF01193">
    <property type="entry name" value="RNA_pol_L"/>
    <property type="match status" value="1"/>
</dbReference>
<dbReference type="SMART" id="SM00662">
    <property type="entry name" value="RPOLD"/>
    <property type="match status" value="1"/>
</dbReference>
<dbReference type="SUPFAM" id="SSF47789">
    <property type="entry name" value="C-terminal domain of RNA polymerase alpha subunit"/>
    <property type="match status" value="1"/>
</dbReference>
<dbReference type="SUPFAM" id="SSF56553">
    <property type="entry name" value="Insert subdomain of RNA polymerase alpha subunit"/>
    <property type="match status" value="1"/>
</dbReference>
<dbReference type="SUPFAM" id="SSF55257">
    <property type="entry name" value="RBP11-like subunits of RNA polymerase"/>
    <property type="match status" value="1"/>
</dbReference>
<evidence type="ECO:0000255" key="1">
    <source>
        <dbReference type="HAMAP-Rule" id="MF_00059"/>
    </source>
</evidence>
<proteinExistence type="inferred from homology"/>
<keyword id="KW-0240">DNA-directed RNA polymerase</keyword>
<keyword id="KW-0548">Nucleotidyltransferase</keyword>
<keyword id="KW-1185">Reference proteome</keyword>
<keyword id="KW-0804">Transcription</keyword>
<keyword id="KW-0808">Transferase</keyword>
<sequence length="339" mass="37512">MVIQRNWQSLIKPEKLDVEPGNEPSRIATIVAEPLERGFGMTLGNAIRRILLSSLQGAAVTAVQIDGVLHEFSSVAGVREDVTDIVLNIKQLALRMHGEGPKRMMLTATGPGEVTAGQIQAGHDIEIMNPDLVLCTLDDGVKLGMEFTVNLGKGYVPASQNRQEDSPIGLIPIDAIYSPVRRVSYKVEPTRVGQVTDYDKLLLTVETNGAVTPEDSVALAARILQDQLQLFINFEEPQQVRHDEPQDDLPFNRNLLRKVDELELSVRSANCLKNDNIVYIGDLVQKSEQEMLRTPNFGRKSLNEIKEVLANMGLSLGMSVSGWPPENIEDLAKRLEEPF</sequence>
<protein>
    <recommendedName>
        <fullName evidence="1">DNA-directed RNA polymerase subunit alpha</fullName>
        <shortName evidence="1">RNAP subunit alpha</shortName>
        <ecNumber evidence="1">2.7.7.6</ecNumber>
    </recommendedName>
    <alternativeName>
        <fullName evidence="1">RNA polymerase subunit alpha</fullName>
    </alternativeName>
    <alternativeName>
        <fullName evidence="1">Transcriptase subunit alpha</fullName>
    </alternativeName>
</protein>
<comment type="function">
    <text evidence="1">DNA-dependent RNA polymerase catalyzes the transcription of DNA into RNA using the four ribonucleoside triphosphates as substrates.</text>
</comment>
<comment type="catalytic activity">
    <reaction evidence="1">
        <text>RNA(n) + a ribonucleoside 5'-triphosphate = RNA(n+1) + diphosphate</text>
        <dbReference type="Rhea" id="RHEA:21248"/>
        <dbReference type="Rhea" id="RHEA-COMP:14527"/>
        <dbReference type="Rhea" id="RHEA-COMP:17342"/>
        <dbReference type="ChEBI" id="CHEBI:33019"/>
        <dbReference type="ChEBI" id="CHEBI:61557"/>
        <dbReference type="ChEBI" id="CHEBI:140395"/>
        <dbReference type="EC" id="2.7.7.6"/>
    </reaction>
</comment>
<comment type="subunit">
    <text evidence="1">Homodimer. The RNAP catalytic core consists of 2 alpha, 1 beta, 1 beta' and 1 omega subunit. When a sigma factor is associated with the core the holoenzyme is formed, which can initiate transcription.</text>
</comment>
<comment type="domain">
    <text evidence="1">The N-terminal domain is essential for RNAP assembly and basal transcription, whereas the C-terminal domain is involved in interaction with transcriptional regulators and with upstream promoter elements.</text>
</comment>
<comment type="similarity">
    <text evidence="1">Belongs to the RNA polymerase alpha chain family.</text>
</comment>
<accession>Q0BUM6</accession>
<name>RPOA_GRABC</name>
<reference key="1">
    <citation type="journal article" date="2007" name="J. Bacteriol.">
        <title>Genome sequence analysis of the emerging human pathogenic acetic acid bacterium Granulibacter bethesdensis.</title>
        <authorList>
            <person name="Greenberg D.E."/>
            <person name="Porcella S.F."/>
            <person name="Zelazny A.M."/>
            <person name="Virtaneva K."/>
            <person name="Sturdevant D.E."/>
            <person name="Kupko J.J. III"/>
            <person name="Barbian K.D."/>
            <person name="Babar A."/>
            <person name="Dorward D.W."/>
            <person name="Holland S.M."/>
        </authorList>
    </citation>
    <scope>NUCLEOTIDE SEQUENCE [LARGE SCALE GENOMIC DNA]</scope>
    <source>
        <strain>ATCC BAA-1260 / CGDNIH1</strain>
    </source>
</reference>
<feature type="chain" id="PRO_0000264503" description="DNA-directed RNA polymerase subunit alpha">
    <location>
        <begin position="1"/>
        <end position="339"/>
    </location>
</feature>
<feature type="region of interest" description="Alpha N-terminal domain (alpha-NTD)" evidence="1">
    <location>
        <begin position="1"/>
        <end position="235"/>
    </location>
</feature>
<feature type="region of interest" description="Alpha C-terminal domain (alpha-CTD)" evidence="1">
    <location>
        <begin position="251"/>
        <end position="339"/>
    </location>
</feature>
<organism>
    <name type="scientific">Granulibacter bethesdensis (strain ATCC BAA-1260 / CGDNIH1)</name>
    <dbReference type="NCBI Taxonomy" id="391165"/>
    <lineage>
        <taxon>Bacteria</taxon>
        <taxon>Pseudomonadati</taxon>
        <taxon>Pseudomonadota</taxon>
        <taxon>Alphaproteobacteria</taxon>
        <taxon>Acetobacterales</taxon>
        <taxon>Acetobacteraceae</taxon>
        <taxon>Granulibacter</taxon>
    </lineage>
</organism>
<gene>
    <name evidence="1" type="primary">rpoA</name>
    <name type="ordered locus">GbCGDNIH1_0578</name>
</gene>